<comment type="function">
    <text evidence="1">Cell wall formation. Catalyzes the transfer of a GlcNAc subunit on undecaprenyl-pyrophosphoryl-MurNAc-pentapeptide (lipid intermediate I) to form undecaprenyl-pyrophosphoryl-MurNAc-(pentapeptide)GlcNAc (lipid intermediate II).</text>
</comment>
<comment type="catalytic activity">
    <reaction evidence="1">
        <text>di-trans,octa-cis-undecaprenyl diphospho-N-acetyl-alpha-D-muramoyl-L-alanyl-D-glutamyl-meso-2,6-diaminopimeloyl-D-alanyl-D-alanine + UDP-N-acetyl-alpha-D-glucosamine = di-trans,octa-cis-undecaprenyl diphospho-[N-acetyl-alpha-D-glucosaminyl-(1-&gt;4)]-N-acetyl-alpha-D-muramoyl-L-alanyl-D-glutamyl-meso-2,6-diaminopimeloyl-D-alanyl-D-alanine + UDP + H(+)</text>
        <dbReference type="Rhea" id="RHEA:31227"/>
        <dbReference type="ChEBI" id="CHEBI:15378"/>
        <dbReference type="ChEBI" id="CHEBI:57705"/>
        <dbReference type="ChEBI" id="CHEBI:58223"/>
        <dbReference type="ChEBI" id="CHEBI:61387"/>
        <dbReference type="ChEBI" id="CHEBI:61388"/>
        <dbReference type="EC" id="2.4.1.227"/>
    </reaction>
</comment>
<comment type="pathway">
    <text evidence="1">Cell wall biogenesis; peptidoglycan biosynthesis.</text>
</comment>
<comment type="subcellular location">
    <subcellularLocation>
        <location evidence="1">Cell inner membrane</location>
        <topology evidence="1">Peripheral membrane protein</topology>
        <orientation evidence="1">Cytoplasmic side</orientation>
    </subcellularLocation>
</comment>
<comment type="similarity">
    <text evidence="1">Belongs to the glycosyltransferase 28 family. MurG subfamily.</text>
</comment>
<protein>
    <recommendedName>
        <fullName evidence="1">UDP-N-acetylglucosamine--N-acetylmuramyl-(pentapeptide) pyrophosphoryl-undecaprenol N-acetylglucosamine transferase</fullName>
        <ecNumber evidence="1">2.4.1.227</ecNumber>
    </recommendedName>
    <alternativeName>
        <fullName evidence="1">Undecaprenyl-PP-MurNAc-pentapeptide-UDPGlcNAc GlcNAc transferase</fullName>
    </alternativeName>
</protein>
<dbReference type="EC" id="2.4.1.227" evidence="1"/>
<dbReference type="EMBL" id="CP000608">
    <property type="protein sequence ID" value="ABO46516.1"/>
    <property type="molecule type" value="Genomic_DNA"/>
</dbReference>
<dbReference type="RefSeq" id="WP_003025531.1">
    <property type="nucleotide sequence ID" value="NC_009257.1"/>
</dbReference>
<dbReference type="SMR" id="A4IX64"/>
<dbReference type="CAZy" id="GT28">
    <property type="family name" value="Glycosyltransferase Family 28"/>
</dbReference>
<dbReference type="KEGG" id="ftw:FTW_0608"/>
<dbReference type="HOGENOM" id="CLU_037404_2_0_6"/>
<dbReference type="UniPathway" id="UPA00219"/>
<dbReference type="GO" id="GO:0005886">
    <property type="term" value="C:plasma membrane"/>
    <property type="evidence" value="ECO:0007669"/>
    <property type="project" value="UniProtKB-SubCell"/>
</dbReference>
<dbReference type="GO" id="GO:0051991">
    <property type="term" value="F:UDP-N-acetyl-D-glucosamine:N-acetylmuramoyl-L-alanyl-D-glutamyl-meso-2,6-diaminopimelyl-D-alanyl-D-alanine-diphosphoundecaprenol 4-beta-N-acetylglucosaminlytransferase activity"/>
    <property type="evidence" value="ECO:0007669"/>
    <property type="project" value="RHEA"/>
</dbReference>
<dbReference type="GO" id="GO:0050511">
    <property type="term" value="F:undecaprenyldiphospho-muramoylpentapeptide beta-N-acetylglucosaminyltransferase activity"/>
    <property type="evidence" value="ECO:0007669"/>
    <property type="project" value="UniProtKB-UniRule"/>
</dbReference>
<dbReference type="GO" id="GO:0005975">
    <property type="term" value="P:carbohydrate metabolic process"/>
    <property type="evidence" value="ECO:0007669"/>
    <property type="project" value="InterPro"/>
</dbReference>
<dbReference type="GO" id="GO:0051301">
    <property type="term" value="P:cell division"/>
    <property type="evidence" value="ECO:0007669"/>
    <property type="project" value="UniProtKB-KW"/>
</dbReference>
<dbReference type="GO" id="GO:0071555">
    <property type="term" value="P:cell wall organization"/>
    <property type="evidence" value="ECO:0007669"/>
    <property type="project" value="UniProtKB-KW"/>
</dbReference>
<dbReference type="GO" id="GO:0030259">
    <property type="term" value="P:lipid glycosylation"/>
    <property type="evidence" value="ECO:0007669"/>
    <property type="project" value="UniProtKB-UniRule"/>
</dbReference>
<dbReference type="GO" id="GO:0009252">
    <property type="term" value="P:peptidoglycan biosynthetic process"/>
    <property type="evidence" value="ECO:0007669"/>
    <property type="project" value="UniProtKB-UniRule"/>
</dbReference>
<dbReference type="GO" id="GO:0008360">
    <property type="term" value="P:regulation of cell shape"/>
    <property type="evidence" value="ECO:0007669"/>
    <property type="project" value="UniProtKB-KW"/>
</dbReference>
<dbReference type="CDD" id="cd03785">
    <property type="entry name" value="GT28_MurG"/>
    <property type="match status" value="1"/>
</dbReference>
<dbReference type="Gene3D" id="3.40.50.2000">
    <property type="entry name" value="Glycogen Phosphorylase B"/>
    <property type="match status" value="2"/>
</dbReference>
<dbReference type="HAMAP" id="MF_00033">
    <property type="entry name" value="MurG"/>
    <property type="match status" value="1"/>
</dbReference>
<dbReference type="InterPro" id="IPR006009">
    <property type="entry name" value="GlcNAc_MurG"/>
</dbReference>
<dbReference type="InterPro" id="IPR007235">
    <property type="entry name" value="Glyco_trans_28_C"/>
</dbReference>
<dbReference type="InterPro" id="IPR004276">
    <property type="entry name" value="GlycoTrans_28_N"/>
</dbReference>
<dbReference type="NCBIfam" id="TIGR01133">
    <property type="entry name" value="murG"/>
    <property type="match status" value="1"/>
</dbReference>
<dbReference type="PANTHER" id="PTHR21015:SF22">
    <property type="entry name" value="GLYCOSYLTRANSFERASE"/>
    <property type="match status" value="1"/>
</dbReference>
<dbReference type="PANTHER" id="PTHR21015">
    <property type="entry name" value="UDP-N-ACETYLGLUCOSAMINE--N-ACETYLMURAMYL-(PENTAPEPTIDE) PYROPHOSPHORYL-UNDECAPRENOL N-ACETYLGLUCOSAMINE TRANSFERASE 1"/>
    <property type="match status" value="1"/>
</dbReference>
<dbReference type="Pfam" id="PF04101">
    <property type="entry name" value="Glyco_tran_28_C"/>
    <property type="match status" value="1"/>
</dbReference>
<dbReference type="Pfam" id="PF03033">
    <property type="entry name" value="Glyco_transf_28"/>
    <property type="match status" value="1"/>
</dbReference>
<dbReference type="SUPFAM" id="SSF53756">
    <property type="entry name" value="UDP-Glycosyltransferase/glycogen phosphorylase"/>
    <property type="match status" value="1"/>
</dbReference>
<keyword id="KW-0131">Cell cycle</keyword>
<keyword id="KW-0132">Cell division</keyword>
<keyword id="KW-0997">Cell inner membrane</keyword>
<keyword id="KW-1003">Cell membrane</keyword>
<keyword id="KW-0133">Cell shape</keyword>
<keyword id="KW-0961">Cell wall biogenesis/degradation</keyword>
<keyword id="KW-0328">Glycosyltransferase</keyword>
<keyword id="KW-0472">Membrane</keyword>
<keyword id="KW-0573">Peptidoglycan synthesis</keyword>
<keyword id="KW-0808">Transferase</keyword>
<name>MURG_FRATW</name>
<proteinExistence type="inferred from homology"/>
<organism>
    <name type="scientific">Francisella tularensis subsp. tularensis (strain WY96-3418)</name>
    <dbReference type="NCBI Taxonomy" id="418136"/>
    <lineage>
        <taxon>Bacteria</taxon>
        <taxon>Pseudomonadati</taxon>
        <taxon>Pseudomonadota</taxon>
        <taxon>Gammaproteobacteria</taxon>
        <taxon>Thiotrichales</taxon>
        <taxon>Francisellaceae</taxon>
        <taxon>Francisella</taxon>
    </lineage>
</organism>
<gene>
    <name evidence="1" type="primary">murG</name>
    <name type="ordered locus">FTW_0608</name>
</gene>
<evidence type="ECO:0000255" key="1">
    <source>
        <dbReference type="HAMAP-Rule" id="MF_00033"/>
    </source>
</evidence>
<reference key="1">
    <citation type="journal article" date="2007" name="PLoS ONE">
        <title>Complete genomic characterization of a pathogenic A.II strain of Francisella tularensis subspecies tularensis.</title>
        <authorList>
            <person name="Beckstrom-Sternberg S.M."/>
            <person name="Auerbach R.K."/>
            <person name="Godbole S."/>
            <person name="Pearson J.V."/>
            <person name="Beckstrom-Sternberg J.S."/>
            <person name="Deng Z."/>
            <person name="Munk C."/>
            <person name="Kubota K."/>
            <person name="Zhou Y."/>
            <person name="Bruce D."/>
            <person name="Noronha J."/>
            <person name="Scheuermann R.H."/>
            <person name="Wang A."/>
            <person name="Wei X."/>
            <person name="Wang J."/>
            <person name="Hao J."/>
            <person name="Wagner D.M."/>
            <person name="Brettin T.S."/>
            <person name="Brown N."/>
            <person name="Gilna P."/>
            <person name="Keim P.S."/>
        </authorList>
    </citation>
    <scope>NUCLEOTIDE SEQUENCE [LARGE SCALE GENOMIC DNA]</scope>
    <source>
        <strain>WY96-3418</strain>
    </source>
</reference>
<sequence length="371" mass="40830">MSLENKNIIITAGGTGGHIYPALAIAELLRQNKANVTWVGTPNSMEASIVPEYFNIQFIKSSGVRRKGIIKKITFPLKLAYNTLKSRSLLKKLKADLVIGFGGYVSGPICLAAAQINIPVIIHEQNAKIGLTNRILAKFATTICLAFEIENLHKQFSSKQLAKTKIVGNPVRKDIVALNDKARIYTDSSTLKILVLGGSQGAKAINEIIPKLIQKSNEQGINIKVWHQTGKLSLEETKDAYKDISQNHIKDIAAFIDDMAIAYNWADLVICRAGALTVSECAIAGLPAIFIPLPSAVDDHQFFNAQNIVNNNAGFCLRQQQMTLENLLAIIKPLNQDRSKLEQMSKMAKKTLIKNSSEQILDCVKKILNNK</sequence>
<feature type="chain" id="PRO_1000002650" description="UDP-N-acetylglucosamine--N-acetylmuramyl-(pentapeptide) pyrophosphoryl-undecaprenol N-acetylglucosamine transferase">
    <location>
        <begin position="1"/>
        <end position="371"/>
    </location>
</feature>
<feature type="binding site" evidence="1">
    <location>
        <begin position="15"/>
        <end position="17"/>
    </location>
    <ligand>
        <name>UDP-N-acetyl-alpha-D-glucosamine</name>
        <dbReference type="ChEBI" id="CHEBI:57705"/>
    </ligand>
</feature>
<feature type="binding site" evidence="1">
    <location>
        <position position="126"/>
    </location>
    <ligand>
        <name>UDP-N-acetyl-alpha-D-glucosamine</name>
        <dbReference type="ChEBI" id="CHEBI:57705"/>
    </ligand>
</feature>
<feature type="binding site" evidence="1">
    <location>
        <position position="172"/>
    </location>
    <ligand>
        <name>UDP-N-acetyl-alpha-D-glucosamine</name>
        <dbReference type="ChEBI" id="CHEBI:57705"/>
    </ligand>
</feature>
<feature type="binding site" evidence="1">
    <location>
        <position position="199"/>
    </location>
    <ligand>
        <name>UDP-N-acetyl-alpha-D-glucosamine</name>
        <dbReference type="ChEBI" id="CHEBI:57705"/>
    </ligand>
</feature>
<feature type="binding site" evidence="1">
    <location>
        <position position="256"/>
    </location>
    <ligand>
        <name>UDP-N-acetyl-alpha-D-glucosamine</name>
        <dbReference type="ChEBI" id="CHEBI:57705"/>
    </ligand>
</feature>
<feature type="binding site" evidence="1">
    <location>
        <begin position="275"/>
        <end position="280"/>
    </location>
    <ligand>
        <name>UDP-N-acetyl-alpha-D-glucosamine</name>
        <dbReference type="ChEBI" id="CHEBI:57705"/>
    </ligand>
</feature>
<feature type="binding site" evidence="1">
    <location>
        <position position="301"/>
    </location>
    <ligand>
        <name>UDP-N-acetyl-alpha-D-glucosamine</name>
        <dbReference type="ChEBI" id="CHEBI:57705"/>
    </ligand>
</feature>
<accession>A4IX64</accession>